<organism>
    <name type="scientific">Hydrogenovibrio crunogenus (strain DSM 25203 / XCL-2)</name>
    <name type="common">Thiomicrospira crunogena</name>
    <dbReference type="NCBI Taxonomy" id="317025"/>
    <lineage>
        <taxon>Bacteria</taxon>
        <taxon>Pseudomonadati</taxon>
        <taxon>Pseudomonadota</taxon>
        <taxon>Gammaproteobacteria</taxon>
        <taxon>Thiotrichales</taxon>
        <taxon>Piscirickettsiaceae</taxon>
        <taxon>Hydrogenovibrio</taxon>
    </lineage>
</organism>
<dbReference type="EMBL" id="CP000109">
    <property type="protein sequence ID" value="ABB40900.1"/>
    <property type="molecule type" value="Genomic_DNA"/>
</dbReference>
<dbReference type="SMR" id="Q31IX3"/>
<dbReference type="STRING" id="317025.Tcr_0304"/>
<dbReference type="KEGG" id="tcx:Tcr_0304"/>
<dbReference type="eggNOG" id="COG0186">
    <property type="taxonomic scope" value="Bacteria"/>
</dbReference>
<dbReference type="HOGENOM" id="CLU_073626_1_1_6"/>
<dbReference type="OrthoDB" id="9811714at2"/>
<dbReference type="GO" id="GO:0022627">
    <property type="term" value="C:cytosolic small ribosomal subunit"/>
    <property type="evidence" value="ECO:0007669"/>
    <property type="project" value="TreeGrafter"/>
</dbReference>
<dbReference type="GO" id="GO:0019843">
    <property type="term" value="F:rRNA binding"/>
    <property type="evidence" value="ECO:0007669"/>
    <property type="project" value="UniProtKB-UniRule"/>
</dbReference>
<dbReference type="GO" id="GO:0003735">
    <property type="term" value="F:structural constituent of ribosome"/>
    <property type="evidence" value="ECO:0007669"/>
    <property type="project" value="InterPro"/>
</dbReference>
<dbReference type="GO" id="GO:0006412">
    <property type="term" value="P:translation"/>
    <property type="evidence" value="ECO:0007669"/>
    <property type="project" value="UniProtKB-UniRule"/>
</dbReference>
<dbReference type="CDD" id="cd00364">
    <property type="entry name" value="Ribosomal_uS17"/>
    <property type="match status" value="1"/>
</dbReference>
<dbReference type="Gene3D" id="2.40.50.140">
    <property type="entry name" value="Nucleic acid-binding proteins"/>
    <property type="match status" value="1"/>
</dbReference>
<dbReference type="HAMAP" id="MF_01345_B">
    <property type="entry name" value="Ribosomal_uS17_B"/>
    <property type="match status" value="1"/>
</dbReference>
<dbReference type="InterPro" id="IPR012340">
    <property type="entry name" value="NA-bd_OB-fold"/>
</dbReference>
<dbReference type="InterPro" id="IPR000266">
    <property type="entry name" value="Ribosomal_uS17"/>
</dbReference>
<dbReference type="InterPro" id="IPR019984">
    <property type="entry name" value="Ribosomal_uS17_bact/chlr"/>
</dbReference>
<dbReference type="NCBIfam" id="NF004123">
    <property type="entry name" value="PRK05610.1"/>
    <property type="match status" value="1"/>
</dbReference>
<dbReference type="NCBIfam" id="TIGR03635">
    <property type="entry name" value="uS17_bact"/>
    <property type="match status" value="1"/>
</dbReference>
<dbReference type="PANTHER" id="PTHR10744">
    <property type="entry name" value="40S RIBOSOMAL PROTEIN S11 FAMILY MEMBER"/>
    <property type="match status" value="1"/>
</dbReference>
<dbReference type="PANTHER" id="PTHR10744:SF1">
    <property type="entry name" value="SMALL RIBOSOMAL SUBUNIT PROTEIN US17M"/>
    <property type="match status" value="1"/>
</dbReference>
<dbReference type="Pfam" id="PF00366">
    <property type="entry name" value="Ribosomal_S17"/>
    <property type="match status" value="1"/>
</dbReference>
<dbReference type="PRINTS" id="PR00973">
    <property type="entry name" value="RIBOSOMALS17"/>
</dbReference>
<dbReference type="SUPFAM" id="SSF50249">
    <property type="entry name" value="Nucleic acid-binding proteins"/>
    <property type="match status" value="1"/>
</dbReference>
<comment type="function">
    <text evidence="1">One of the primary rRNA binding proteins, it binds specifically to the 5'-end of 16S ribosomal RNA.</text>
</comment>
<comment type="subunit">
    <text evidence="1">Part of the 30S ribosomal subunit.</text>
</comment>
<comment type="similarity">
    <text evidence="1">Belongs to the universal ribosomal protein uS17 family.</text>
</comment>
<gene>
    <name evidence="1" type="primary">rpsQ</name>
    <name type="ordered locus">Tcr_0304</name>
</gene>
<proteinExistence type="inferred from homology"/>
<protein>
    <recommendedName>
        <fullName evidence="1">Small ribosomal subunit protein uS17</fullName>
    </recommendedName>
    <alternativeName>
        <fullName evidence="2">30S ribosomal protein S17</fullName>
    </alternativeName>
</protein>
<reference key="1">
    <citation type="journal article" date="2006" name="PLoS Biol.">
        <title>The genome of deep-sea vent chemolithoautotroph Thiomicrospira crunogena XCL-2.</title>
        <authorList>
            <person name="Scott K.M."/>
            <person name="Sievert S.M."/>
            <person name="Abril F.N."/>
            <person name="Ball L.A."/>
            <person name="Barrett C.J."/>
            <person name="Blake R.A."/>
            <person name="Boller A.J."/>
            <person name="Chain P.S.G."/>
            <person name="Clark J.A."/>
            <person name="Davis C.R."/>
            <person name="Detter C."/>
            <person name="Do K.F."/>
            <person name="Dobrinski K.P."/>
            <person name="Faza B.I."/>
            <person name="Fitzpatrick K.A."/>
            <person name="Freyermuth S.K."/>
            <person name="Harmer T.L."/>
            <person name="Hauser L.J."/>
            <person name="Huegler M."/>
            <person name="Kerfeld C.A."/>
            <person name="Klotz M.G."/>
            <person name="Kong W.W."/>
            <person name="Land M."/>
            <person name="Lapidus A."/>
            <person name="Larimer F.W."/>
            <person name="Longo D.L."/>
            <person name="Lucas S."/>
            <person name="Malfatti S.A."/>
            <person name="Massey S.E."/>
            <person name="Martin D.D."/>
            <person name="McCuddin Z."/>
            <person name="Meyer F."/>
            <person name="Moore J.L."/>
            <person name="Ocampo L.H. Jr."/>
            <person name="Paul J.H."/>
            <person name="Paulsen I.T."/>
            <person name="Reep D.K."/>
            <person name="Ren Q."/>
            <person name="Ross R.L."/>
            <person name="Sato P.Y."/>
            <person name="Thomas P."/>
            <person name="Tinkham L.E."/>
            <person name="Zeruth G.T."/>
        </authorList>
    </citation>
    <scope>NUCLEOTIDE SEQUENCE [LARGE SCALE GENOMIC DNA]</scope>
    <source>
        <strain>DSM 25203 / XCL-2</strain>
    </source>
</reference>
<feature type="chain" id="PRO_0000233597" description="Small ribosomal subunit protein uS17">
    <location>
        <begin position="1"/>
        <end position="87"/>
    </location>
</feature>
<sequence>MAGSENKARTMQGVVVSNGMDKSVVVMTNRYIKHPKYKKFVRKSTKVMAHDADNACGVGDRVTISECTPFSKRKTWSLVSIDEKAAL</sequence>
<name>RS17_HYDCU</name>
<keyword id="KW-0687">Ribonucleoprotein</keyword>
<keyword id="KW-0689">Ribosomal protein</keyword>
<keyword id="KW-0694">RNA-binding</keyword>
<keyword id="KW-0699">rRNA-binding</keyword>
<evidence type="ECO:0000255" key="1">
    <source>
        <dbReference type="HAMAP-Rule" id="MF_01345"/>
    </source>
</evidence>
<evidence type="ECO:0000305" key="2"/>
<accession>Q31IX3</accession>